<keyword id="KW-0963">Cytoplasm</keyword>
<keyword id="KW-0349">Heme</keyword>
<keyword id="KW-0408">Iron</keyword>
<keyword id="KW-0479">Metal-binding</keyword>
<keyword id="KW-0514">Muscle protein</keyword>
<keyword id="KW-0560">Oxidoreductase</keyword>
<keyword id="KW-0561">Oxygen transport</keyword>
<keyword id="KW-0813">Transport</keyword>
<organism>
    <name type="scientific">Notothenia neglecta</name>
    <name type="common">Yellowbelly rockcod</name>
    <name type="synonym">Notothenia coriiceps neglecta</name>
    <dbReference type="NCBI Taxonomy" id="202063"/>
    <lineage>
        <taxon>Eukaryota</taxon>
        <taxon>Metazoa</taxon>
        <taxon>Chordata</taxon>
        <taxon>Craniata</taxon>
        <taxon>Vertebrata</taxon>
        <taxon>Euteleostomi</taxon>
        <taxon>Actinopterygii</taxon>
        <taxon>Neopterygii</taxon>
        <taxon>Teleostei</taxon>
        <taxon>Neoteleostei</taxon>
        <taxon>Acanthomorphata</taxon>
        <taxon>Eupercaria</taxon>
        <taxon>Perciformes</taxon>
        <taxon>Notothenioidei</taxon>
        <taxon>Nototheniidae</taxon>
        <taxon>Notothenia</taxon>
    </lineage>
</organism>
<reference key="1">
    <citation type="journal article" date="1997" name="Mol. Mar. Biol. Biotechnol.">
        <title>Conservation of the myoglobin gene among Antarctic notothenioid fishes.</title>
        <authorList>
            <person name="Vayda M.E."/>
            <person name="Small D.J."/>
            <person name="Yuan M.-L."/>
            <person name="Costello L."/>
            <person name="Sidell B.D."/>
        </authorList>
    </citation>
    <scope>NUCLEOTIDE SEQUENCE [MRNA]</scope>
    <source>
        <tissue>Heart ventricle</tissue>
    </source>
</reference>
<sequence>MADFDMVLKCWGPMEADYATHGGLVLTRLFTEHPETLKLFPKFAGIAHGDLAGDAGVSAHGATVLNKLGDLLKARGAHAALLKPLSSSHATKHKIPIINFKLIAEVIGKVMEEKAGLDAAGQTALRNVMAVIIADMEADYKELGFTE</sequence>
<dbReference type="EC" id="1.7.-.-" evidence="2"/>
<dbReference type="EC" id="1.11.1.-" evidence="2"/>
<dbReference type="EMBL" id="U71058">
    <property type="protein sequence ID" value="AAG16646.1"/>
    <property type="molecule type" value="mRNA"/>
</dbReference>
<dbReference type="SMR" id="Q9DEN8"/>
<dbReference type="GO" id="GO:0070062">
    <property type="term" value="C:extracellular exosome"/>
    <property type="evidence" value="ECO:0007669"/>
    <property type="project" value="TreeGrafter"/>
</dbReference>
<dbReference type="GO" id="GO:0016528">
    <property type="term" value="C:sarcoplasm"/>
    <property type="evidence" value="ECO:0000250"/>
    <property type="project" value="UniProtKB"/>
</dbReference>
<dbReference type="GO" id="GO:0020037">
    <property type="term" value="F:heme binding"/>
    <property type="evidence" value="ECO:0007669"/>
    <property type="project" value="InterPro"/>
</dbReference>
<dbReference type="GO" id="GO:0046872">
    <property type="term" value="F:metal ion binding"/>
    <property type="evidence" value="ECO:0007669"/>
    <property type="project" value="UniProtKB-KW"/>
</dbReference>
<dbReference type="GO" id="GO:0098809">
    <property type="term" value="F:nitrite reductase activity"/>
    <property type="evidence" value="ECO:0000250"/>
    <property type="project" value="UniProtKB"/>
</dbReference>
<dbReference type="GO" id="GO:0019825">
    <property type="term" value="F:oxygen binding"/>
    <property type="evidence" value="ECO:0007669"/>
    <property type="project" value="InterPro"/>
</dbReference>
<dbReference type="GO" id="GO:0005344">
    <property type="term" value="F:oxygen carrier activity"/>
    <property type="evidence" value="ECO:0000250"/>
    <property type="project" value="UniProtKB"/>
</dbReference>
<dbReference type="GO" id="GO:0004601">
    <property type="term" value="F:peroxidase activity"/>
    <property type="evidence" value="ECO:0000250"/>
    <property type="project" value="UniProtKB"/>
</dbReference>
<dbReference type="GO" id="GO:0019430">
    <property type="term" value="P:removal of superoxide radicals"/>
    <property type="evidence" value="ECO:0000250"/>
    <property type="project" value="UniProtKB"/>
</dbReference>
<dbReference type="Gene3D" id="6.10.140.2100">
    <property type="match status" value="1"/>
</dbReference>
<dbReference type="Gene3D" id="6.10.140.2110">
    <property type="match status" value="1"/>
</dbReference>
<dbReference type="InterPro" id="IPR000971">
    <property type="entry name" value="Globin"/>
</dbReference>
<dbReference type="InterPro" id="IPR009050">
    <property type="entry name" value="Globin-like_sf"/>
</dbReference>
<dbReference type="InterPro" id="IPR002335">
    <property type="entry name" value="Myoglobin"/>
</dbReference>
<dbReference type="PANTHER" id="PTHR47132">
    <property type="entry name" value="MYOGLOBIN"/>
    <property type="match status" value="1"/>
</dbReference>
<dbReference type="PANTHER" id="PTHR47132:SF1">
    <property type="entry name" value="MYOGLOBIN"/>
    <property type="match status" value="1"/>
</dbReference>
<dbReference type="Pfam" id="PF00042">
    <property type="entry name" value="Globin"/>
    <property type="match status" value="1"/>
</dbReference>
<dbReference type="PRINTS" id="PR00613">
    <property type="entry name" value="MYOGLOBIN"/>
</dbReference>
<dbReference type="SUPFAM" id="SSF46458">
    <property type="entry name" value="Globin-like"/>
    <property type="match status" value="1"/>
</dbReference>
<dbReference type="PROSITE" id="PS01033">
    <property type="entry name" value="GLOBIN"/>
    <property type="match status" value="1"/>
</dbReference>
<feature type="initiator methionine" description="Removed" evidence="1">
    <location>
        <position position="1"/>
    </location>
</feature>
<feature type="chain" id="PRO_0000053369" description="Myoglobin">
    <location>
        <begin position="2"/>
        <end position="147"/>
    </location>
</feature>
<feature type="domain" description="Globin" evidence="6">
    <location>
        <begin position="2"/>
        <end position="141"/>
    </location>
</feature>
<feature type="binding site" evidence="5">
    <location>
        <position position="60"/>
    </location>
    <ligand>
        <name>nitrite</name>
        <dbReference type="ChEBI" id="CHEBI:16301"/>
    </ligand>
</feature>
<feature type="binding site" evidence="4 6">
    <location>
        <position position="60"/>
    </location>
    <ligand>
        <name>O2</name>
        <dbReference type="ChEBI" id="CHEBI:15379"/>
    </ligand>
</feature>
<feature type="binding site" description="proximal binding residue" evidence="2">
    <location>
        <position position="89"/>
    </location>
    <ligand>
        <name>heme b</name>
        <dbReference type="ChEBI" id="CHEBI:60344"/>
    </ligand>
    <ligandPart>
        <name>Fe</name>
        <dbReference type="ChEBI" id="CHEBI:18248"/>
    </ligandPart>
</feature>
<name>MYG_NOTNE</name>
<gene>
    <name type="primary">mb</name>
</gene>
<accession>Q9DEN8</accession>
<proteinExistence type="evidence at transcript level"/>
<protein>
    <recommendedName>
        <fullName>Myoglobin</fullName>
    </recommendedName>
    <alternativeName>
        <fullName evidence="2">Nitrite reductase MB</fullName>
        <ecNumber evidence="2">1.7.-.-</ecNumber>
    </alternativeName>
    <alternativeName>
        <fullName evidence="2">Pseudoperoxidase MB</fullName>
        <ecNumber evidence="2">1.11.1.-</ecNumber>
    </alternativeName>
</protein>
<comment type="function">
    <text evidence="2">Monomeric heme protein which primary function is to store oxygen and facilitate its diffusion within muscle tissues. Reversibly binds oxygen through a pentacoordinated heme iron and enables its timely and efficient release as needed during periods of heightened demand. Depending on the oxidative conditions of tissues and cells, and in addition to its ability to bind oxygen, it also has a nitrite reductase activity whereby it regulates the production of bioactive nitric oxide. Under stress conditions, like hypoxia and anoxia, it also protects cells against reactive oxygen species thanks to its pseudoperoxidase activity.</text>
</comment>
<comment type="catalytic activity">
    <reaction evidence="2">
        <text>Fe(III)-heme b-[protein] + nitric oxide + H2O = Fe(II)-heme b-[protein] + nitrite + 2 H(+)</text>
        <dbReference type="Rhea" id="RHEA:77711"/>
        <dbReference type="Rhea" id="RHEA-COMP:18975"/>
        <dbReference type="Rhea" id="RHEA-COMP:18976"/>
        <dbReference type="ChEBI" id="CHEBI:15377"/>
        <dbReference type="ChEBI" id="CHEBI:15378"/>
        <dbReference type="ChEBI" id="CHEBI:16301"/>
        <dbReference type="ChEBI" id="CHEBI:16480"/>
        <dbReference type="ChEBI" id="CHEBI:55376"/>
        <dbReference type="ChEBI" id="CHEBI:60344"/>
    </reaction>
    <physiologicalReaction direction="right-to-left" evidence="2">
        <dbReference type="Rhea" id="RHEA:77713"/>
    </physiologicalReaction>
</comment>
<comment type="catalytic activity">
    <reaction evidence="2">
        <text>H2O2 + AH2 = A + 2 H2O</text>
        <dbReference type="Rhea" id="RHEA:30275"/>
        <dbReference type="ChEBI" id="CHEBI:13193"/>
        <dbReference type="ChEBI" id="CHEBI:15377"/>
        <dbReference type="ChEBI" id="CHEBI:16240"/>
        <dbReference type="ChEBI" id="CHEBI:17499"/>
    </reaction>
</comment>
<comment type="subunit">
    <text evidence="3">Monomeric.</text>
</comment>
<comment type="subcellular location">
    <subcellularLocation>
        <location evidence="2">Cytoplasm</location>
        <location evidence="2">Sarcoplasm</location>
    </subcellularLocation>
</comment>
<comment type="similarity">
    <text evidence="6">Belongs to the globin family.</text>
</comment>
<evidence type="ECO:0000250" key="1"/>
<evidence type="ECO:0000250" key="2">
    <source>
        <dbReference type="UniProtKB" id="P02144"/>
    </source>
</evidence>
<evidence type="ECO:0000250" key="3">
    <source>
        <dbReference type="UniProtKB" id="P02185"/>
    </source>
</evidence>
<evidence type="ECO:0000250" key="4">
    <source>
        <dbReference type="UniProtKB" id="P02189"/>
    </source>
</evidence>
<evidence type="ECO:0000250" key="5">
    <source>
        <dbReference type="UniProtKB" id="P68082"/>
    </source>
</evidence>
<evidence type="ECO:0000255" key="6">
    <source>
        <dbReference type="PROSITE-ProRule" id="PRU00238"/>
    </source>
</evidence>